<protein>
    <recommendedName>
        <fullName evidence="1">Large ribosomal subunit protein bL20</fullName>
    </recommendedName>
    <alternativeName>
        <fullName evidence="2">50S ribosomal protein L20</fullName>
    </alternativeName>
</protein>
<keyword id="KW-0687">Ribonucleoprotein</keyword>
<keyword id="KW-0689">Ribosomal protein</keyword>
<keyword id="KW-0694">RNA-binding</keyword>
<keyword id="KW-0699">rRNA-binding</keyword>
<sequence length="129" mass="14411">MARVKRAVNAQKKRRTVLKASKGYRGQRSRLYRKAKEQQLHSLTYAYRDRRARKGEFRKLWISRINAAARANDITYNRLIQGLKAAGVEVDRKNLAEIAVSDAAAFTALVEVAKAALPEDVNAPSGEAA</sequence>
<name>RL20_MYCSS</name>
<comment type="function">
    <text evidence="1">Binds directly to 23S ribosomal RNA and is necessary for the in vitro assembly process of the 50S ribosomal subunit. It is not involved in the protein synthesizing functions of that subunit.</text>
</comment>
<comment type="similarity">
    <text evidence="1">Belongs to the bacterial ribosomal protein bL20 family.</text>
</comment>
<proteinExistence type="inferred from homology"/>
<feature type="chain" id="PRO_1000049015" description="Large ribosomal subunit protein bL20">
    <location>
        <begin position="1"/>
        <end position="129"/>
    </location>
</feature>
<dbReference type="EMBL" id="CP000384">
    <property type="protein sequence ID" value="ABG09086.1"/>
    <property type="molecule type" value="Genomic_DNA"/>
</dbReference>
<dbReference type="SMR" id="Q1B7P8"/>
<dbReference type="KEGG" id="mmc:Mmcs_2979"/>
<dbReference type="HOGENOM" id="CLU_123265_0_0_11"/>
<dbReference type="BioCyc" id="MSP164756:G1G6O-3039-MONOMER"/>
<dbReference type="GO" id="GO:1990904">
    <property type="term" value="C:ribonucleoprotein complex"/>
    <property type="evidence" value="ECO:0007669"/>
    <property type="project" value="UniProtKB-KW"/>
</dbReference>
<dbReference type="GO" id="GO:0005840">
    <property type="term" value="C:ribosome"/>
    <property type="evidence" value="ECO:0007669"/>
    <property type="project" value="UniProtKB-KW"/>
</dbReference>
<dbReference type="GO" id="GO:0019843">
    <property type="term" value="F:rRNA binding"/>
    <property type="evidence" value="ECO:0007669"/>
    <property type="project" value="UniProtKB-UniRule"/>
</dbReference>
<dbReference type="GO" id="GO:0003735">
    <property type="term" value="F:structural constituent of ribosome"/>
    <property type="evidence" value="ECO:0007669"/>
    <property type="project" value="InterPro"/>
</dbReference>
<dbReference type="GO" id="GO:0000027">
    <property type="term" value="P:ribosomal large subunit assembly"/>
    <property type="evidence" value="ECO:0007669"/>
    <property type="project" value="UniProtKB-UniRule"/>
</dbReference>
<dbReference type="GO" id="GO:0006412">
    <property type="term" value="P:translation"/>
    <property type="evidence" value="ECO:0007669"/>
    <property type="project" value="InterPro"/>
</dbReference>
<dbReference type="CDD" id="cd07026">
    <property type="entry name" value="Ribosomal_L20"/>
    <property type="match status" value="1"/>
</dbReference>
<dbReference type="FunFam" id="1.10.1900.20:FF:000001">
    <property type="entry name" value="50S ribosomal protein L20"/>
    <property type="match status" value="1"/>
</dbReference>
<dbReference type="Gene3D" id="6.10.160.10">
    <property type="match status" value="1"/>
</dbReference>
<dbReference type="Gene3D" id="1.10.1900.20">
    <property type="entry name" value="Ribosomal protein L20"/>
    <property type="match status" value="1"/>
</dbReference>
<dbReference type="HAMAP" id="MF_00382">
    <property type="entry name" value="Ribosomal_bL20"/>
    <property type="match status" value="1"/>
</dbReference>
<dbReference type="InterPro" id="IPR005813">
    <property type="entry name" value="Ribosomal_bL20"/>
</dbReference>
<dbReference type="InterPro" id="IPR049946">
    <property type="entry name" value="RIBOSOMAL_L20_CS"/>
</dbReference>
<dbReference type="InterPro" id="IPR035566">
    <property type="entry name" value="Ribosomal_protein_bL20_C"/>
</dbReference>
<dbReference type="NCBIfam" id="TIGR01032">
    <property type="entry name" value="rplT_bact"/>
    <property type="match status" value="1"/>
</dbReference>
<dbReference type="PANTHER" id="PTHR10986">
    <property type="entry name" value="39S RIBOSOMAL PROTEIN L20"/>
    <property type="match status" value="1"/>
</dbReference>
<dbReference type="Pfam" id="PF00453">
    <property type="entry name" value="Ribosomal_L20"/>
    <property type="match status" value="1"/>
</dbReference>
<dbReference type="PRINTS" id="PR00062">
    <property type="entry name" value="RIBOSOMALL20"/>
</dbReference>
<dbReference type="SUPFAM" id="SSF74731">
    <property type="entry name" value="Ribosomal protein L20"/>
    <property type="match status" value="1"/>
</dbReference>
<dbReference type="PROSITE" id="PS00937">
    <property type="entry name" value="RIBOSOMAL_L20"/>
    <property type="match status" value="1"/>
</dbReference>
<gene>
    <name evidence="1" type="primary">rplT</name>
    <name type="ordered locus">Mmcs_2979</name>
</gene>
<evidence type="ECO:0000255" key="1">
    <source>
        <dbReference type="HAMAP-Rule" id="MF_00382"/>
    </source>
</evidence>
<evidence type="ECO:0000305" key="2"/>
<reference key="1">
    <citation type="submission" date="2006-06" db="EMBL/GenBank/DDBJ databases">
        <title>Complete sequence of chromosome of Mycobacterium sp. MCS.</title>
        <authorList>
            <consortium name="US DOE Joint Genome Institute"/>
            <person name="Copeland A."/>
            <person name="Lucas S."/>
            <person name="Lapidus A."/>
            <person name="Barry K."/>
            <person name="Detter J.C."/>
            <person name="Glavina del Rio T."/>
            <person name="Hammon N."/>
            <person name="Israni S."/>
            <person name="Dalin E."/>
            <person name="Tice H."/>
            <person name="Pitluck S."/>
            <person name="Martinez M."/>
            <person name="Schmutz J."/>
            <person name="Larimer F."/>
            <person name="Land M."/>
            <person name="Hauser L."/>
            <person name="Kyrpides N."/>
            <person name="Kim E."/>
            <person name="Miller C.D."/>
            <person name="Hughes J.E."/>
            <person name="Anderson A.J."/>
            <person name="Sims R.C."/>
            <person name="Richardson P."/>
        </authorList>
    </citation>
    <scope>NUCLEOTIDE SEQUENCE [LARGE SCALE GENOMIC DNA]</scope>
    <source>
        <strain>MCS</strain>
    </source>
</reference>
<accession>Q1B7P8</accession>
<organism>
    <name type="scientific">Mycobacterium sp. (strain MCS)</name>
    <dbReference type="NCBI Taxonomy" id="164756"/>
    <lineage>
        <taxon>Bacteria</taxon>
        <taxon>Bacillati</taxon>
        <taxon>Actinomycetota</taxon>
        <taxon>Actinomycetes</taxon>
        <taxon>Mycobacteriales</taxon>
        <taxon>Mycobacteriaceae</taxon>
        <taxon>Mycobacterium</taxon>
    </lineage>
</organism>